<reference key="1">
    <citation type="journal article" date="2002" name="J. Bacteriol.">
        <title>Whole-genome comparison of Mycobacterium tuberculosis clinical and laboratory strains.</title>
        <authorList>
            <person name="Fleischmann R.D."/>
            <person name="Alland D."/>
            <person name="Eisen J.A."/>
            <person name="Carpenter L."/>
            <person name="White O."/>
            <person name="Peterson J.D."/>
            <person name="DeBoy R.T."/>
            <person name="Dodson R.J."/>
            <person name="Gwinn M.L."/>
            <person name="Haft D.H."/>
            <person name="Hickey E.K."/>
            <person name="Kolonay J.F."/>
            <person name="Nelson W.C."/>
            <person name="Umayam L.A."/>
            <person name="Ermolaeva M.D."/>
            <person name="Salzberg S.L."/>
            <person name="Delcher A."/>
            <person name="Utterback T.R."/>
            <person name="Weidman J.F."/>
            <person name="Khouri H.M."/>
            <person name="Gill J."/>
            <person name="Mikula A."/>
            <person name="Bishai W."/>
            <person name="Jacobs W.R. Jr."/>
            <person name="Venter J.C."/>
            <person name="Fraser C.M."/>
        </authorList>
    </citation>
    <scope>NUCLEOTIDE SEQUENCE [LARGE SCALE GENOMIC DNA]</scope>
    <source>
        <strain>CDC 1551 / Oshkosh</strain>
    </source>
</reference>
<comment type="function">
    <text evidence="2">Necessary for efficient RNA polymerase transcription elongation past template-encoded arresting sites. The arresting sites in DNA have the property of trapping a certain fraction of elongating RNA polymerases that pass through, resulting in locked ternary complexes. Cleavage of the nascent transcript by cleavage factors such as GreA or GreB allows the resumption of elongation from the new 3'terminus. GreA releases sequences of 2 to 3 nucleotides.</text>
</comment>
<comment type="similarity">
    <text evidence="2">Belongs to the GreA/GreB family.</text>
</comment>
<dbReference type="EMBL" id="AE000516">
    <property type="protein sequence ID" value="AAK45367.1"/>
    <property type="molecule type" value="Genomic_DNA"/>
</dbReference>
<dbReference type="PIR" id="F70894">
    <property type="entry name" value="F70894"/>
</dbReference>
<dbReference type="RefSeq" id="WP_003405742.1">
    <property type="nucleotide sequence ID" value="NZ_KK341227.1"/>
</dbReference>
<dbReference type="SMR" id="P9WMT8"/>
<dbReference type="GeneID" id="45425053"/>
<dbReference type="KEGG" id="mtc:MT1111"/>
<dbReference type="PATRIC" id="fig|83331.31.peg.1196"/>
<dbReference type="HOGENOM" id="CLU_101379_0_0_11"/>
<dbReference type="Proteomes" id="UP000001020">
    <property type="component" value="Chromosome"/>
</dbReference>
<dbReference type="GO" id="GO:0003677">
    <property type="term" value="F:DNA binding"/>
    <property type="evidence" value="ECO:0007669"/>
    <property type="project" value="UniProtKB-UniRule"/>
</dbReference>
<dbReference type="GO" id="GO:0070063">
    <property type="term" value="F:RNA polymerase binding"/>
    <property type="evidence" value="ECO:0007669"/>
    <property type="project" value="InterPro"/>
</dbReference>
<dbReference type="GO" id="GO:0006354">
    <property type="term" value="P:DNA-templated transcription elongation"/>
    <property type="evidence" value="ECO:0007669"/>
    <property type="project" value="TreeGrafter"/>
</dbReference>
<dbReference type="GO" id="GO:0032784">
    <property type="term" value="P:regulation of DNA-templated transcription elongation"/>
    <property type="evidence" value="ECO:0007669"/>
    <property type="project" value="UniProtKB-UniRule"/>
</dbReference>
<dbReference type="FunFam" id="1.10.287.180:FF:000001">
    <property type="entry name" value="Transcription elongation factor GreA"/>
    <property type="match status" value="1"/>
</dbReference>
<dbReference type="FunFam" id="3.10.50.30:FF:000003">
    <property type="entry name" value="Transcription elongation factor GreA"/>
    <property type="match status" value="1"/>
</dbReference>
<dbReference type="Gene3D" id="3.10.50.30">
    <property type="entry name" value="Transcription elongation factor, GreA/GreB, C-terminal domain"/>
    <property type="match status" value="1"/>
</dbReference>
<dbReference type="Gene3D" id="1.10.287.180">
    <property type="entry name" value="Transcription elongation factor, GreA/GreB, N-terminal domain"/>
    <property type="match status" value="1"/>
</dbReference>
<dbReference type="HAMAP" id="MF_00105">
    <property type="entry name" value="GreA_GreB"/>
    <property type="match status" value="1"/>
</dbReference>
<dbReference type="InterPro" id="IPR036953">
    <property type="entry name" value="GreA/GreB_C_sf"/>
</dbReference>
<dbReference type="InterPro" id="IPR018151">
    <property type="entry name" value="TF_GreA/GreB_CS"/>
</dbReference>
<dbReference type="InterPro" id="IPR006359">
    <property type="entry name" value="Tscrpt_elong_fac_GreA"/>
</dbReference>
<dbReference type="InterPro" id="IPR028624">
    <property type="entry name" value="Tscrpt_elong_fac_GreA/B"/>
</dbReference>
<dbReference type="InterPro" id="IPR001437">
    <property type="entry name" value="Tscrpt_elong_fac_GreA/B_C"/>
</dbReference>
<dbReference type="InterPro" id="IPR023459">
    <property type="entry name" value="Tscrpt_elong_fac_GreA/B_fam"/>
</dbReference>
<dbReference type="InterPro" id="IPR022691">
    <property type="entry name" value="Tscrpt_elong_fac_GreA/B_N"/>
</dbReference>
<dbReference type="InterPro" id="IPR036805">
    <property type="entry name" value="Tscrpt_elong_fac_GreA/B_N_sf"/>
</dbReference>
<dbReference type="NCBIfam" id="TIGR01462">
    <property type="entry name" value="greA"/>
    <property type="match status" value="1"/>
</dbReference>
<dbReference type="NCBIfam" id="NF001262">
    <property type="entry name" value="PRK00226.1-3"/>
    <property type="match status" value="1"/>
</dbReference>
<dbReference type="PANTHER" id="PTHR30437">
    <property type="entry name" value="TRANSCRIPTION ELONGATION FACTOR GREA"/>
    <property type="match status" value="1"/>
</dbReference>
<dbReference type="PANTHER" id="PTHR30437:SF4">
    <property type="entry name" value="TRANSCRIPTION ELONGATION FACTOR GREA"/>
    <property type="match status" value="1"/>
</dbReference>
<dbReference type="Pfam" id="PF01272">
    <property type="entry name" value="GreA_GreB"/>
    <property type="match status" value="1"/>
</dbReference>
<dbReference type="Pfam" id="PF03449">
    <property type="entry name" value="GreA_GreB_N"/>
    <property type="match status" value="1"/>
</dbReference>
<dbReference type="PIRSF" id="PIRSF006092">
    <property type="entry name" value="GreA_GreB"/>
    <property type="match status" value="1"/>
</dbReference>
<dbReference type="SUPFAM" id="SSF54534">
    <property type="entry name" value="FKBP-like"/>
    <property type="match status" value="1"/>
</dbReference>
<dbReference type="SUPFAM" id="SSF46557">
    <property type="entry name" value="GreA transcript cleavage protein, N-terminal domain"/>
    <property type="match status" value="1"/>
</dbReference>
<dbReference type="PROSITE" id="PS00829">
    <property type="entry name" value="GREAB_1"/>
    <property type="match status" value="1"/>
</dbReference>
<dbReference type="PROSITE" id="PS00830">
    <property type="entry name" value="GREAB_2"/>
    <property type="match status" value="1"/>
</dbReference>
<organism>
    <name type="scientific">Mycobacterium tuberculosis (strain CDC 1551 / Oshkosh)</name>
    <dbReference type="NCBI Taxonomy" id="83331"/>
    <lineage>
        <taxon>Bacteria</taxon>
        <taxon>Bacillati</taxon>
        <taxon>Actinomycetota</taxon>
        <taxon>Actinomycetes</taxon>
        <taxon>Mycobacteriales</taxon>
        <taxon>Mycobacteriaceae</taxon>
        <taxon>Mycobacterium</taxon>
        <taxon>Mycobacterium tuberculosis complex</taxon>
    </lineage>
</organism>
<gene>
    <name evidence="2" type="primary">greA</name>
    <name type="ordered locus">MT1111</name>
</gene>
<accession>P9WMT8</accession>
<accession>L0T5S2</accession>
<accession>O53428</accession>
<accession>P64279</accession>
<protein>
    <recommendedName>
        <fullName evidence="2">Transcription elongation factor GreA</fullName>
    </recommendedName>
    <alternativeName>
        <fullName evidence="2">Transcript cleavage factor GreA</fullName>
    </alternativeName>
</protein>
<name>GREA_MYCTO</name>
<proteinExistence type="inferred from homology"/>
<evidence type="ECO:0000250" key="1"/>
<evidence type="ECO:0000255" key="2">
    <source>
        <dbReference type="HAMAP-Rule" id="MF_00105"/>
    </source>
</evidence>
<sequence>MTDTQVTWLTQESHDRLKAELDQLIANRPVIAAEINDRREEGDLRENGGYHAAREEQGQQEARIRQLQDLLSNAKVGEAPKQSGVALPGSVVKVYYNGDKSDSETFLIATRQEGVSDGKLEVYSPNSPLGGALIDAKVGETRSYTVPNGSTVSVTLVSAEPYHS</sequence>
<feature type="initiator methionine" description="Removed" evidence="1">
    <location>
        <position position="1"/>
    </location>
</feature>
<feature type="chain" id="PRO_0000427244" description="Transcription elongation factor GreA">
    <location>
        <begin position="2"/>
        <end position="164"/>
    </location>
</feature>
<feature type="coiled-coil region" evidence="2">
    <location>
        <begin position="50"/>
        <end position="76"/>
    </location>
</feature>
<keyword id="KW-0175">Coiled coil</keyword>
<keyword id="KW-0238">DNA-binding</keyword>
<keyword id="KW-1185">Reference proteome</keyword>
<keyword id="KW-0804">Transcription</keyword>
<keyword id="KW-0805">Transcription regulation</keyword>